<name>NREC_STAAB</name>
<proteinExistence type="inferred from homology"/>
<comment type="function">
    <text evidence="1">Member of the two-component regulatory system NreB/NreC involved in the control of dissimilatory nitrate/nitrite reduction in response to oxygen. Phosphorylated NreC binds to a GC-rich palindromic sequence at the promoters of the nitrate (narGHJI) and nitrite (nir) reductase operons, as well as the putative nitrate transporter gene narT, and activates their expression (By similarity).</text>
</comment>
<comment type="subcellular location">
    <subcellularLocation>
        <location evidence="4">Cytoplasm</location>
    </subcellularLocation>
</comment>
<comment type="PTM">
    <text evidence="1">Phosphorylated by NreB.</text>
</comment>
<gene>
    <name type="primary">nreC</name>
    <name type="ordered locus">SAB2270c</name>
</gene>
<feature type="chain" id="PRO_0000349342" description="Oxygen regulatory protein NreC">
    <location>
        <begin position="1"/>
        <end position="217"/>
    </location>
</feature>
<feature type="domain" description="Response regulatory" evidence="2">
    <location>
        <begin position="2"/>
        <end position="119"/>
    </location>
</feature>
<feature type="domain" description="HTH luxR-type" evidence="3">
    <location>
        <begin position="148"/>
        <end position="213"/>
    </location>
</feature>
<feature type="DNA-binding region" description="H-T-H motif" evidence="3">
    <location>
        <begin position="172"/>
        <end position="191"/>
    </location>
</feature>
<feature type="modified residue" description="4-aspartylphosphate" evidence="2">
    <location>
        <position position="53"/>
    </location>
</feature>
<sequence length="217" mass="24354">MKIVIADDHAVVRTGFSMILNYQNDMEVVATAADGVEAYQKVMEYKPDVLLMDLSMPPGESGLIATSKIADSFPETKILILTMFDDEEYLFHVLRNGAKGYILKNAPDEQLLLAIRTVYKGETYVDMKLTTSLVNEFVSNSNQDTANTSDPFKILSKRELEILPLIAKGYGNKEIAEKLFVSVKTVEAHKTHIMTKLGLKSKPELVEYALKKKLLEF</sequence>
<organism>
    <name type="scientific">Staphylococcus aureus (strain bovine RF122 / ET3-1)</name>
    <dbReference type="NCBI Taxonomy" id="273036"/>
    <lineage>
        <taxon>Bacteria</taxon>
        <taxon>Bacillati</taxon>
        <taxon>Bacillota</taxon>
        <taxon>Bacilli</taxon>
        <taxon>Bacillales</taxon>
        <taxon>Staphylococcaceae</taxon>
        <taxon>Staphylococcus</taxon>
    </lineage>
</organism>
<evidence type="ECO:0000250" key="1"/>
<evidence type="ECO:0000255" key="2">
    <source>
        <dbReference type="PROSITE-ProRule" id="PRU00169"/>
    </source>
</evidence>
<evidence type="ECO:0000255" key="3">
    <source>
        <dbReference type="PROSITE-ProRule" id="PRU00411"/>
    </source>
</evidence>
<evidence type="ECO:0000305" key="4"/>
<accession>Q2YZ42</accession>
<keyword id="KW-0010">Activator</keyword>
<keyword id="KW-0963">Cytoplasm</keyword>
<keyword id="KW-0238">DNA-binding</keyword>
<keyword id="KW-0597">Phosphoprotein</keyword>
<keyword id="KW-0804">Transcription</keyword>
<keyword id="KW-0805">Transcription regulation</keyword>
<keyword id="KW-0902">Two-component regulatory system</keyword>
<dbReference type="EMBL" id="AJ938182">
    <property type="protein sequence ID" value="CAI81959.1"/>
    <property type="molecule type" value="Genomic_DNA"/>
</dbReference>
<dbReference type="RefSeq" id="WP_000706314.1">
    <property type="nucleotide sequence ID" value="NC_007622.1"/>
</dbReference>
<dbReference type="SMR" id="Q2YZ42"/>
<dbReference type="KEGG" id="sab:SAB2270c"/>
<dbReference type="HOGENOM" id="CLU_000445_90_1_9"/>
<dbReference type="GO" id="GO:0005737">
    <property type="term" value="C:cytoplasm"/>
    <property type="evidence" value="ECO:0007669"/>
    <property type="project" value="UniProtKB-SubCell"/>
</dbReference>
<dbReference type="GO" id="GO:0003677">
    <property type="term" value="F:DNA binding"/>
    <property type="evidence" value="ECO:0007669"/>
    <property type="project" value="UniProtKB-KW"/>
</dbReference>
<dbReference type="GO" id="GO:0000160">
    <property type="term" value="P:phosphorelay signal transduction system"/>
    <property type="evidence" value="ECO:0007669"/>
    <property type="project" value="UniProtKB-KW"/>
</dbReference>
<dbReference type="GO" id="GO:0006355">
    <property type="term" value="P:regulation of DNA-templated transcription"/>
    <property type="evidence" value="ECO:0007669"/>
    <property type="project" value="InterPro"/>
</dbReference>
<dbReference type="CDD" id="cd06170">
    <property type="entry name" value="LuxR_C_like"/>
    <property type="match status" value="1"/>
</dbReference>
<dbReference type="CDD" id="cd17535">
    <property type="entry name" value="REC_NarL-like"/>
    <property type="match status" value="1"/>
</dbReference>
<dbReference type="Gene3D" id="3.40.50.2300">
    <property type="match status" value="1"/>
</dbReference>
<dbReference type="InterPro" id="IPR011006">
    <property type="entry name" value="CheY-like_superfamily"/>
</dbReference>
<dbReference type="InterPro" id="IPR016032">
    <property type="entry name" value="Sig_transdc_resp-reg_C-effctor"/>
</dbReference>
<dbReference type="InterPro" id="IPR001789">
    <property type="entry name" value="Sig_transdc_resp-reg_receiver"/>
</dbReference>
<dbReference type="InterPro" id="IPR000792">
    <property type="entry name" value="Tscrpt_reg_LuxR_C"/>
</dbReference>
<dbReference type="InterPro" id="IPR039420">
    <property type="entry name" value="WalR-like"/>
</dbReference>
<dbReference type="PANTHER" id="PTHR43214:SF37">
    <property type="entry name" value="TRANSCRIPTIONAL REGULATORY PROTEIN YDFI"/>
    <property type="match status" value="1"/>
</dbReference>
<dbReference type="PANTHER" id="PTHR43214">
    <property type="entry name" value="TWO-COMPONENT RESPONSE REGULATOR"/>
    <property type="match status" value="1"/>
</dbReference>
<dbReference type="Pfam" id="PF00196">
    <property type="entry name" value="GerE"/>
    <property type="match status" value="1"/>
</dbReference>
<dbReference type="Pfam" id="PF00072">
    <property type="entry name" value="Response_reg"/>
    <property type="match status" value="1"/>
</dbReference>
<dbReference type="PRINTS" id="PR00038">
    <property type="entry name" value="HTHLUXR"/>
</dbReference>
<dbReference type="SMART" id="SM00421">
    <property type="entry name" value="HTH_LUXR"/>
    <property type="match status" value="1"/>
</dbReference>
<dbReference type="SMART" id="SM00448">
    <property type="entry name" value="REC"/>
    <property type="match status" value="1"/>
</dbReference>
<dbReference type="SUPFAM" id="SSF46894">
    <property type="entry name" value="C-terminal effector domain of the bipartite response regulators"/>
    <property type="match status" value="1"/>
</dbReference>
<dbReference type="SUPFAM" id="SSF52172">
    <property type="entry name" value="CheY-like"/>
    <property type="match status" value="1"/>
</dbReference>
<dbReference type="PROSITE" id="PS00622">
    <property type="entry name" value="HTH_LUXR_1"/>
    <property type="match status" value="1"/>
</dbReference>
<dbReference type="PROSITE" id="PS50043">
    <property type="entry name" value="HTH_LUXR_2"/>
    <property type="match status" value="1"/>
</dbReference>
<dbReference type="PROSITE" id="PS50110">
    <property type="entry name" value="RESPONSE_REGULATORY"/>
    <property type="match status" value="1"/>
</dbReference>
<reference key="1">
    <citation type="journal article" date="2007" name="PLoS ONE">
        <title>Molecular correlates of host specialization in Staphylococcus aureus.</title>
        <authorList>
            <person name="Herron-Olson L."/>
            <person name="Fitzgerald J.R."/>
            <person name="Musser J.M."/>
            <person name="Kapur V."/>
        </authorList>
    </citation>
    <scope>NUCLEOTIDE SEQUENCE [LARGE SCALE GENOMIC DNA]</scope>
    <source>
        <strain>bovine RF122 / ET3-1</strain>
    </source>
</reference>
<protein>
    <recommendedName>
        <fullName>Oxygen regulatory protein NreC</fullName>
    </recommendedName>
    <alternativeName>
        <fullName>Nitrogen regulation protein C</fullName>
    </alternativeName>
</protein>